<comment type="function">
    <text evidence="2">Involved in peptide bond synthesis. Alleviates ribosome stalling that occurs when 3 or more consecutive Pro residues or the sequence PPG is present in a protein, possibly by augmenting the peptidyl transferase activity of the ribosome. Modification of Lys-34 is required for alleviation.</text>
</comment>
<comment type="pathway">
    <text evidence="2">Protein biosynthesis; polypeptide chain elongation.</text>
</comment>
<comment type="subcellular location">
    <subcellularLocation>
        <location evidence="2">Cytoplasm</location>
    </subcellularLocation>
</comment>
<comment type="PTM">
    <text evidence="2">Is beta-lysylated on the epsilon-amino group of Lys-34 by the combined action of EpmA and EpmB, and then hydroxylated on the C5 position of the same residue by EpmC. Lysylation is critical for the stimulatory effect of EF-P on peptide-bond formation. The lysylation moiety would extend toward the peptidyltransferase center and stabilize the terminal 3-CCA end of the tRNA. The hydroxylation of the C5 position on Lys-34 would allow additional potential stabilizing hydrogen-bond interactions with the P-tRNA.</text>
</comment>
<comment type="similarity">
    <text evidence="2">Belongs to the elongation factor P family.</text>
</comment>
<proteinExistence type="inferred from homology"/>
<keyword id="KW-0963">Cytoplasm</keyword>
<keyword id="KW-0251">Elongation factor</keyword>
<keyword id="KW-0379">Hydroxylation</keyword>
<keyword id="KW-0648">Protein biosynthesis</keyword>
<keyword id="KW-1185">Reference proteome</keyword>
<name>EFP_HAEIN</name>
<protein>
    <recommendedName>
        <fullName evidence="2">Elongation factor P</fullName>
        <shortName evidence="2">EF-P</shortName>
    </recommendedName>
</protein>
<accession>P43771</accession>
<organism>
    <name type="scientific">Haemophilus influenzae (strain ATCC 51907 / DSM 11121 / KW20 / Rd)</name>
    <dbReference type="NCBI Taxonomy" id="71421"/>
    <lineage>
        <taxon>Bacteria</taxon>
        <taxon>Pseudomonadati</taxon>
        <taxon>Pseudomonadota</taxon>
        <taxon>Gammaproteobacteria</taxon>
        <taxon>Pasteurellales</taxon>
        <taxon>Pasteurellaceae</taxon>
        <taxon>Haemophilus</taxon>
    </lineage>
</organism>
<dbReference type="EMBL" id="L42023">
    <property type="protein sequence ID" value="AAC21989.1"/>
    <property type="molecule type" value="Genomic_DNA"/>
</dbReference>
<dbReference type="PIR" id="I64061">
    <property type="entry name" value="I64061"/>
</dbReference>
<dbReference type="RefSeq" id="NP_438492.3">
    <property type="nucleotide sequence ID" value="NC_000907.1"/>
</dbReference>
<dbReference type="SMR" id="P43771"/>
<dbReference type="STRING" id="71421.HI_0328"/>
<dbReference type="EnsemblBacteria" id="AAC21989">
    <property type="protein sequence ID" value="AAC21989"/>
    <property type="gene ID" value="HI_0328"/>
</dbReference>
<dbReference type="KEGG" id="hin:HI_0328"/>
<dbReference type="PATRIC" id="fig|71421.8.peg.345"/>
<dbReference type="eggNOG" id="COG0231">
    <property type="taxonomic scope" value="Bacteria"/>
</dbReference>
<dbReference type="HOGENOM" id="CLU_074944_0_0_6"/>
<dbReference type="OrthoDB" id="9801844at2"/>
<dbReference type="PhylomeDB" id="P43771"/>
<dbReference type="BioCyc" id="HINF71421:G1GJ1-344-MONOMER"/>
<dbReference type="UniPathway" id="UPA00345"/>
<dbReference type="Proteomes" id="UP000000579">
    <property type="component" value="Chromosome"/>
</dbReference>
<dbReference type="GO" id="GO:0005737">
    <property type="term" value="C:cytoplasm"/>
    <property type="evidence" value="ECO:0000318"/>
    <property type="project" value="GO_Central"/>
</dbReference>
<dbReference type="GO" id="GO:0003746">
    <property type="term" value="F:translation elongation factor activity"/>
    <property type="evidence" value="ECO:0000318"/>
    <property type="project" value="GO_Central"/>
</dbReference>
<dbReference type="GO" id="GO:0043043">
    <property type="term" value="P:peptide biosynthetic process"/>
    <property type="evidence" value="ECO:0007669"/>
    <property type="project" value="InterPro"/>
</dbReference>
<dbReference type="CDD" id="cd04470">
    <property type="entry name" value="S1_EF-P_repeat_1"/>
    <property type="match status" value="1"/>
</dbReference>
<dbReference type="CDD" id="cd05794">
    <property type="entry name" value="S1_EF-P_repeat_2"/>
    <property type="match status" value="1"/>
</dbReference>
<dbReference type="FunFam" id="2.30.30.30:FF:000003">
    <property type="entry name" value="Elongation factor P"/>
    <property type="match status" value="1"/>
</dbReference>
<dbReference type="FunFam" id="2.40.50.140:FF:000004">
    <property type="entry name" value="Elongation factor P"/>
    <property type="match status" value="1"/>
</dbReference>
<dbReference type="FunFam" id="2.40.50.140:FF:000009">
    <property type="entry name" value="Elongation factor P"/>
    <property type="match status" value="1"/>
</dbReference>
<dbReference type="Gene3D" id="2.30.30.30">
    <property type="match status" value="1"/>
</dbReference>
<dbReference type="Gene3D" id="2.40.50.140">
    <property type="entry name" value="Nucleic acid-binding proteins"/>
    <property type="match status" value="2"/>
</dbReference>
<dbReference type="HAMAP" id="MF_00141">
    <property type="entry name" value="EF_P"/>
    <property type="match status" value="1"/>
</dbReference>
<dbReference type="InterPro" id="IPR015365">
    <property type="entry name" value="Elong-fact-P_C"/>
</dbReference>
<dbReference type="InterPro" id="IPR012340">
    <property type="entry name" value="NA-bd_OB-fold"/>
</dbReference>
<dbReference type="InterPro" id="IPR014722">
    <property type="entry name" value="Rib_uL2_dom2"/>
</dbReference>
<dbReference type="InterPro" id="IPR020599">
    <property type="entry name" value="Transl_elong_fac_P/YeiP"/>
</dbReference>
<dbReference type="InterPro" id="IPR013185">
    <property type="entry name" value="Transl_elong_KOW-like"/>
</dbReference>
<dbReference type="InterPro" id="IPR001059">
    <property type="entry name" value="Transl_elong_P/YeiP_cen"/>
</dbReference>
<dbReference type="InterPro" id="IPR013852">
    <property type="entry name" value="Transl_elong_P/YeiP_CS"/>
</dbReference>
<dbReference type="InterPro" id="IPR011768">
    <property type="entry name" value="Transl_elongation_fac_P"/>
</dbReference>
<dbReference type="InterPro" id="IPR008991">
    <property type="entry name" value="Translation_prot_SH3-like_sf"/>
</dbReference>
<dbReference type="NCBIfam" id="TIGR00038">
    <property type="entry name" value="efp"/>
    <property type="match status" value="1"/>
</dbReference>
<dbReference type="NCBIfam" id="NF001810">
    <property type="entry name" value="PRK00529.1"/>
    <property type="match status" value="1"/>
</dbReference>
<dbReference type="PANTHER" id="PTHR30053">
    <property type="entry name" value="ELONGATION FACTOR P"/>
    <property type="match status" value="1"/>
</dbReference>
<dbReference type="PANTHER" id="PTHR30053:SF12">
    <property type="entry name" value="ELONGATION FACTOR P (EF-P) FAMILY PROTEIN"/>
    <property type="match status" value="1"/>
</dbReference>
<dbReference type="Pfam" id="PF01132">
    <property type="entry name" value="EFP"/>
    <property type="match status" value="1"/>
</dbReference>
<dbReference type="Pfam" id="PF08207">
    <property type="entry name" value="EFP_N"/>
    <property type="match status" value="1"/>
</dbReference>
<dbReference type="Pfam" id="PF09285">
    <property type="entry name" value="Elong-fact-P_C"/>
    <property type="match status" value="1"/>
</dbReference>
<dbReference type="PIRSF" id="PIRSF005901">
    <property type="entry name" value="EF-P"/>
    <property type="match status" value="1"/>
</dbReference>
<dbReference type="SMART" id="SM01185">
    <property type="entry name" value="EFP"/>
    <property type="match status" value="1"/>
</dbReference>
<dbReference type="SMART" id="SM00841">
    <property type="entry name" value="Elong-fact-P_C"/>
    <property type="match status" value="1"/>
</dbReference>
<dbReference type="SUPFAM" id="SSF50249">
    <property type="entry name" value="Nucleic acid-binding proteins"/>
    <property type="match status" value="2"/>
</dbReference>
<dbReference type="SUPFAM" id="SSF50104">
    <property type="entry name" value="Translation proteins SH3-like domain"/>
    <property type="match status" value="1"/>
</dbReference>
<dbReference type="PROSITE" id="PS01275">
    <property type="entry name" value="EFP"/>
    <property type="match status" value="1"/>
</dbReference>
<reference key="1">
    <citation type="journal article" date="1995" name="Science">
        <title>Whole-genome random sequencing and assembly of Haemophilus influenzae Rd.</title>
        <authorList>
            <person name="Fleischmann R.D."/>
            <person name="Adams M.D."/>
            <person name="White O."/>
            <person name="Clayton R.A."/>
            <person name="Kirkness E.F."/>
            <person name="Kerlavage A.R."/>
            <person name="Bult C.J."/>
            <person name="Tomb J.-F."/>
            <person name="Dougherty B.A."/>
            <person name="Merrick J.M."/>
            <person name="McKenney K."/>
            <person name="Sutton G.G."/>
            <person name="FitzHugh W."/>
            <person name="Fields C.A."/>
            <person name="Gocayne J.D."/>
            <person name="Scott J.D."/>
            <person name="Shirley R."/>
            <person name="Liu L.-I."/>
            <person name="Glodek A."/>
            <person name="Kelley J.M."/>
            <person name="Weidman J.F."/>
            <person name="Phillips C.A."/>
            <person name="Spriggs T."/>
            <person name="Hedblom E."/>
            <person name="Cotton M.D."/>
            <person name="Utterback T.R."/>
            <person name="Hanna M.C."/>
            <person name="Nguyen D.T."/>
            <person name="Saudek D.M."/>
            <person name="Brandon R.C."/>
            <person name="Fine L.D."/>
            <person name="Fritchman J.L."/>
            <person name="Fuhrmann J.L."/>
            <person name="Geoghagen N.S.M."/>
            <person name="Gnehm C.L."/>
            <person name="McDonald L.A."/>
            <person name="Small K.V."/>
            <person name="Fraser C.M."/>
            <person name="Smith H.O."/>
            <person name="Venter J.C."/>
        </authorList>
    </citation>
    <scope>NUCLEOTIDE SEQUENCE [LARGE SCALE GENOMIC DNA]</scope>
    <source>
        <strain>ATCC 51907 / DSM 11121 / KW20 / Rd</strain>
    </source>
</reference>
<gene>
    <name evidence="2" type="primary">efp</name>
    <name type="ordered locus">HI_0328</name>
</gene>
<feature type="initiator methionine" description="Removed" evidence="1">
    <location>
        <position position="1"/>
    </location>
</feature>
<feature type="chain" id="PRO_0000094258" description="Elongation factor P">
    <location>
        <begin position="2"/>
        <end position="188"/>
    </location>
</feature>
<feature type="modified residue" description="N6-(3,6-diaminohexanoyl)-5-hydroxylysine" evidence="2">
    <location>
        <position position="34"/>
    </location>
</feature>
<sequence length="188" mass="20612">MATYTTSDFKPGLKFMQDGEPCVIVENEFVKPGKGQAFTRTRIRKLISGKVLDVNFKSGTSVEAADVMDLNLTYSYKDDAFWYFMHPETFEQYSADAKAVGDAEKWLLDQADCIVTLWNGAPITVTPPNFVELEIVDTDPGLKGDTAGTGGKPATLSTGAVVKVPLFVQIGEVIRVDTRSGEYVSRVK</sequence>
<evidence type="ECO:0000250" key="1"/>
<evidence type="ECO:0000255" key="2">
    <source>
        <dbReference type="HAMAP-Rule" id="MF_00141"/>
    </source>
</evidence>